<sequence>MAEITTIARPYAKAAFEFALEQKAVESWAEMLNFAALVSENETMQPLLSGSVASGKLAELFIGVCGEQINEQAQNLLKVMAENGRLVVLPAVAQQFVELQREYAKEVEAQIVSATELTSEQLQALSVSLEKRLARKVKLNCSIDTSLIAGVIITAGDLVIDGSVRGKVSRLSDTLQS</sequence>
<accession>B0TQF7</accession>
<gene>
    <name evidence="1" type="primary">atpH</name>
    <name type="ordered locus">Shal_4297</name>
</gene>
<evidence type="ECO:0000255" key="1">
    <source>
        <dbReference type="HAMAP-Rule" id="MF_01416"/>
    </source>
</evidence>
<reference key="1">
    <citation type="submission" date="2008-01" db="EMBL/GenBank/DDBJ databases">
        <title>Complete sequence of Shewanella halifaxensis HAW-EB4.</title>
        <authorList>
            <consortium name="US DOE Joint Genome Institute"/>
            <person name="Copeland A."/>
            <person name="Lucas S."/>
            <person name="Lapidus A."/>
            <person name="Glavina del Rio T."/>
            <person name="Dalin E."/>
            <person name="Tice H."/>
            <person name="Bruce D."/>
            <person name="Goodwin L."/>
            <person name="Pitluck S."/>
            <person name="Sims D."/>
            <person name="Brettin T."/>
            <person name="Detter J.C."/>
            <person name="Han C."/>
            <person name="Kuske C.R."/>
            <person name="Schmutz J."/>
            <person name="Larimer F."/>
            <person name="Land M."/>
            <person name="Hauser L."/>
            <person name="Kyrpides N."/>
            <person name="Kim E."/>
            <person name="Zhao J.-S."/>
            <person name="Richardson P."/>
        </authorList>
    </citation>
    <scope>NUCLEOTIDE SEQUENCE [LARGE SCALE GENOMIC DNA]</scope>
    <source>
        <strain>HAW-EB4</strain>
    </source>
</reference>
<proteinExistence type="inferred from homology"/>
<feature type="chain" id="PRO_1000184791" description="ATP synthase subunit delta">
    <location>
        <begin position="1"/>
        <end position="177"/>
    </location>
</feature>
<organism>
    <name type="scientific">Shewanella halifaxensis (strain HAW-EB4)</name>
    <dbReference type="NCBI Taxonomy" id="458817"/>
    <lineage>
        <taxon>Bacteria</taxon>
        <taxon>Pseudomonadati</taxon>
        <taxon>Pseudomonadota</taxon>
        <taxon>Gammaproteobacteria</taxon>
        <taxon>Alteromonadales</taxon>
        <taxon>Shewanellaceae</taxon>
        <taxon>Shewanella</taxon>
    </lineage>
</organism>
<comment type="function">
    <text evidence="1">F(1)F(0) ATP synthase produces ATP from ADP in the presence of a proton or sodium gradient. F-type ATPases consist of two structural domains, F(1) containing the extramembraneous catalytic core and F(0) containing the membrane proton channel, linked together by a central stalk and a peripheral stalk. During catalysis, ATP synthesis in the catalytic domain of F(1) is coupled via a rotary mechanism of the central stalk subunits to proton translocation.</text>
</comment>
<comment type="function">
    <text evidence="1">This protein is part of the stalk that links CF(0) to CF(1). It either transmits conformational changes from CF(0) to CF(1) or is implicated in proton conduction.</text>
</comment>
<comment type="subunit">
    <text evidence="1">F-type ATPases have 2 components, F(1) - the catalytic core - and F(0) - the membrane proton channel. F(1) has five subunits: alpha(3), beta(3), gamma(1), delta(1), epsilon(1). F(0) has three main subunits: a(1), b(2) and c(10-14). The alpha and beta chains form an alternating ring which encloses part of the gamma chain. F(1) is attached to F(0) by a central stalk formed by the gamma and epsilon chains, while a peripheral stalk is formed by the delta and b chains.</text>
</comment>
<comment type="subcellular location">
    <subcellularLocation>
        <location evidence="1">Cell inner membrane</location>
        <topology evidence="1">Peripheral membrane protein</topology>
    </subcellularLocation>
</comment>
<comment type="similarity">
    <text evidence="1">Belongs to the ATPase delta chain family.</text>
</comment>
<dbReference type="EMBL" id="CP000931">
    <property type="protein sequence ID" value="ABZ78837.1"/>
    <property type="molecule type" value="Genomic_DNA"/>
</dbReference>
<dbReference type="RefSeq" id="WP_012279341.1">
    <property type="nucleotide sequence ID" value="NC_010334.1"/>
</dbReference>
<dbReference type="SMR" id="B0TQF7"/>
<dbReference type="STRING" id="458817.Shal_4297"/>
<dbReference type="KEGG" id="shl:Shal_4297"/>
<dbReference type="eggNOG" id="COG0712">
    <property type="taxonomic scope" value="Bacteria"/>
</dbReference>
<dbReference type="HOGENOM" id="CLU_085114_3_0_6"/>
<dbReference type="OrthoDB" id="9816221at2"/>
<dbReference type="Proteomes" id="UP000001317">
    <property type="component" value="Chromosome"/>
</dbReference>
<dbReference type="GO" id="GO:0005886">
    <property type="term" value="C:plasma membrane"/>
    <property type="evidence" value="ECO:0007669"/>
    <property type="project" value="UniProtKB-SubCell"/>
</dbReference>
<dbReference type="GO" id="GO:0045259">
    <property type="term" value="C:proton-transporting ATP synthase complex"/>
    <property type="evidence" value="ECO:0007669"/>
    <property type="project" value="UniProtKB-KW"/>
</dbReference>
<dbReference type="GO" id="GO:0046933">
    <property type="term" value="F:proton-transporting ATP synthase activity, rotational mechanism"/>
    <property type="evidence" value="ECO:0007669"/>
    <property type="project" value="UniProtKB-UniRule"/>
</dbReference>
<dbReference type="Gene3D" id="1.10.520.20">
    <property type="entry name" value="N-terminal domain of the delta subunit of the F1F0-ATP synthase"/>
    <property type="match status" value="1"/>
</dbReference>
<dbReference type="HAMAP" id="MF_01416">
    <property type="entry name" value="ATP_synth_delta_bact"/>
    <property type="match status" value="1"/>
</dbReference>
<dbReference type="InterPro" id="IPR026015">
    <property type="entry name" value="ATP_synth_OSCP/delta_N_sf"/>
</dbReference>
<dbReference type="InterPro" id="IPR000711">
    <property type="entry name" value="ATPase_OSCP/dsu"/>
</dbReference>
<dbReference type="NCBIfam" id="TIGR01145">
    <property type="entry name" value="ATP_synt_delta"/>
    <property type="match status" value="1"/>
</dbReference>
<dbReference type="NCBIfam" id="NF004402">
    <property type="entry name" value="PRK05758.2-2"/>
    <property type="match status" value="1"/>
</dbReference>
<dbReference type="NCBIfam" id="NF004404">
    <property type="entry name" value="PRK05758.2-5"/>
    <property type="match status" value="1"/>
</dbReference>
<dbReference type="PANTHER" id="PTHR11910">
    <property type="entry name" value="ATP SYNTHASE DELTA CHAIN"/>
    <property type="match status" value="1"/>
</dbReference>
<dbReference type="Pfam" id="PF00213">
    <property type="entry name" value="OSCP"/>
    <property type="match status" value="1"/>
</dbReference>
<dbReference type="PRINTS" id="PR00125">
    <property type="entry name" value="ATPASEDELTA"/>
</dbReference>
<dbReference type="SUPFAM" id="SSF47928">
    <property type="entry name" value="N-terminal domain of the delta subunit of the F1F0-ATP synthase"/>
    <property type="match status" value="1"/>
</dbReference>
<name>ATPD_SHEHH</name>
<protein>
    <recommendedName>
        <fullName evidence="1">ATP synthase subunit delta</fullName>
    </recommendedName>
    <alternativeName>
        <fullName evidence="1">ATP synthase F(1) sector subunit delta</fullName>
    </alternativeName>
    <alternativeName>
        <fullName evidence="1">F-type ATPase subunit delta</fullName>
        <shortName evidence="1">F-ATPase subunit delta</shortName>
    </alternativeName>
</protein>
<keyword id="KW-0066">ATP synthesis</keyword>
<keyword id="KW-0997">Cell inner membrane</keyword>
<keyword id="KW-1003">Cell membrane</keyword>
<keyword id="KW-0139">CF(1)</keyword>
<keyword id="KW-0375">Hydrogen ion transport</keyword>
<keyword id="KW-0406">Ion transport</keyword>
<keyword id="KW-0472">Membrane</keyword>
<keyword id="KW-0813">Transport</keyword>